<organism>
    <name type="scientific">Thymus caespititius</name>
    <name type="common">Cretan thyme</name>
    <name type="synonym">Origanum caespititium</name>
    <dbReference type="NCBI Taxonomy" id="751871"/>
    <lineage>
        <taxon>Eukaryota</taxon>
        <taxon>Viridiplantae</taxon>
        <taxon>Streptophyta</taxon>
        <taxon>Embryophyta</taxon>
        <taxon>Tracheophyta</taxon>
        <taxon>Spermatophyta</taxon>
        <taxon>Magnoliopsida</taxon>
        <taxon>eudicotyledons</taxon>
        <taxon>Gunneridae</taxon>
        <taxon>Pentapetalae</taxon>
        <taxon>asterids</taxon>
        <taxon>lamiids</taxon>
        <taxon>Lamiales</taxon>
        <taxon>Lamiaceae</taxon>
        <taxon>Nepetoideae</taxon>
        <taxon>Mentheae</taxon>
        <taxon>Thymus</taxon>
    </lineage>
</organism>
<accession>R4JQT5</accession>
<accession>R4JGM8</accession>
<accession>R4JJJ6</accession>
<name>GTPSC_THYCA</name>
<dbReference type="EC" id="4.2.3.114" evidence="6"/>
<dbReference type="EMBL" id="KC691293">
    <property type="protein sequence ID" value="AGK88261.1"/>
    <property type="molecule type" value="Genomic_DNA"/>
</dbReference>
<dbReference type="EMBL" id="KC691294">
    <property type="protein sequence ID" value="AGK88262.1"/>
    <property type="molecule type" value="mRNA"/>
</dbReference>
<dbReference type="EMBL" id="KC691295">
    <property type="protein sequence ID" value="AGK88263.1"/>
    <property type="molecule type" value="mRNA"/>
</dbReference>
<dbReference type="SMR" id="R4JQT5"/>
<dbReference type="UniPathway" id="UPA00213"/>
<dbReference type="GO" id="GO:0009507">
    <property type="term" value="C:chloroplast"/>
    <property type="evidence" value="ECO:0007669"/>
    <property type="project" value="UniProtKB-SubCell"/>
</dbReference>
<dbReference type="GO" id="GO:0000287">
    <property type="term" value="F:magnesium ion binding"/>
    <property type="evidence" value="ECO:0007669"/>
    <property type="project" value="InterPro"/>
</dbReference>
<dbReference type="GO" id="GO:0042803">
    <property type="term" value="F:protein homodimerization activity"/>
    <property type="evidence" value="ECO:0000250"/>
    <property type="project" value="UniProtKB"/>
</dbReference>
<dbReference type="GO" id="GO:0010333">
    <property type="term" value="F:terpene synthase activity"/>
    <property type="evidence" value="ECO:0007669"/>
    <property type="project" value="InterPro"/>
</dbReference>
<dbReference type="GO" id="GO:0016102">
    <property type="term" value="P:diterpenoid biosynthetic process"/>
    <property type="evidence" value="ECO:0007669"/>
    <property type="project" value="InterPro"/>
</dbReference>
<dbReference type="CDD" id="cd00684">
    <property type="entry name" value="Terpene_cyclase_plant_C1"/>
    <property type="match status" value="1"/>
</dbReference>
<dbReference type="FunFam" id="1.10.600.10:FF:000007">
    <property type="entry name" value="Isoprene synthase, chloroplastic"/>
    <property type="match status" value="1"/>
</dbReference>
<dbReference type="FunFam" id="1.50.10.130:FF:000001">
    <property type="entry name" value="Isoprene synthase, chloroplastic"/>
    <property type="match status" value="1"/>
</dbReference>
<dbReference type="Gene3D" id="1.10.600.10">
    <property type="entry name" value="Farnesyl Diphosphate Synthase"/>
    <property type="match status" value="1"/>
</dbReference>
<dbReference type="Gene3D" id="1.50.10.130">
    <property type="entry name" value="Terpene synthase, N-terminal domain"/>
    <property type="match status" value="1"/>
</dbReference>
<dbReference type="InterPro" id="IPR008949">
    <property type="entry name" value="Isoprenoid_synthase_dom_sf"/>
</dbReference>
<dbReference type="InterPro" id="IPR034741">
    <property type="entry name" value="Terpene_cyclase-like_1_C"/>
</dbReference>
<dbReference type="InterPro" id="IPR044814">
    <property type="entry name" value="Terpene_cyclase_plant_C1"/>
</dbReference>
<dbReference type="InterPro" id="IPR001906">
    <property type="entry name" value="Terpene_synth_N"/>
</dbReference>
<dbReference type="InterPro" id="IPR036965">
    <property type="entry name" value="Terpene_synth_N_sf"/>
</dbReference>
<dbReference type="InterPro" id="IPR050148">
    <property type="entry name" value="Terpene_synthase-like"/>
</dbReference>
<dbReference type="InterPro" id="IPR005630">
    <property type="entry name" value="Terpene_synthase_metal-bd"/>
</dbReference>
<dbReference type="InterPro" id="IPR008930">
    <property type="entry name" value="Terpenoid_cyclase/PrenylTrfase"/>
</dbReference>
<dbReference type="PANTHER" id="PTHR31225">
    <property type="entry name" value="OS04G0344100 PROTEIN-RELATED"/>
    <property type="match status" value="1"/>
</dbReference>
<dbReference type="PANTHER" id="PTHR31225:SF9">
    <property type="entry name" value="TERPENE SYNTHASE 10"/>
    <property type="match status" value="1"/>
</dbReference>
<dbReference type="Pfam" id="PF01397">
    <property type="entry name" value="Terpene_synth"/>
    <property type="match status" value="1"/>
</dbReference>
<dbReference type="Pfam" id="PF03936">
    <property type="entry name" value="Terpene_synth_C"/>
    <property type="match status" value="1"/>
</dbReference>
<dbReference type="SFLD" id="SFLDG01019">
    <property type="entry name" value="Terpene_Cyclase_Like_1_C_Termi"/>
    <property type="match status" value="1"/>
</dbReference>
<dbReference type="SFLD" id="SFLDG01604">
    <property type="entry name" value="Terpene_Cyclase_Like_1_C_Termi"/>
    <property type="match status" value="1"/>
</dbReference>
<dbReference type="SUPFAM" id="SSF48239">
    <property type="entry name" value="Terpenoid cyclases/Protein prenyltransferases"/>
    <property type="match status" value="1"/>
</dbReference>
<dbReference type="SUPFAM" id="SSF48576">
    <property type="entry name" value="Terpenoid synthases"/>
    <property type="match status" value="1"/>
</dbReference>
<reference key="1">
    <citation type="journal article" date="2013" name="Planta">
        <title>Genomic characterization, molecular cloning and expression analysis of two terpene synthases from Thymus caespititius (Lamiaceae).</title>
        <authorList>
            <person name="Lima A.S."/>
            <person name="Schimmel J."/>
            <person name="Lukas B."/>
            <person name="Novak J."/>
            <person name="Barroso J.G."/>
            <person name="Figueiredo A.C."/>
            <person name="Pedro L.G."/>
            <person name="Degenhardt J."/>
            <person name="Trindade H."/>
        </authorList>
    </citation>
    <scope>NUCLEOTIDE SEQUENCE [GENOMIC DNA / MRNA] (ISOFORMS 1 AND 2)</scope>
    <scope>FUNCTION</scope>
    <scope>CATALYTIC ACTIVITY</scope>
    <scope>PATHWAY</scope>
    <source>
        <strain>cv. C2</strain>
        <tissue>Flower</tissue>
    </source>
</reference>
<reference key="2">
    <citation type="journal article" date="2015" name="Crit. Rev. Food Sci. Nutr.">
        <title>The bioactivity and toxicological actions of carvacrol.</title>
        <authorList>
            <person name="Suntres Z.E."/>
            <person name="Coccimiglio J."/>
            <person name="Alipour M."/>
        </authorList>
    </citation>
    <scope>REVIEW ON CARVACROL</scope>
    <scope>BIOTECHNOLOGY</scope>
</reference>
<reference key="3">
    <citation type="journal article" date="2018" name="Phytother. Res.">
        <title>Thymol, thyme, and other plant sources: Health and potential uses.</title>
        <authorList>
            <person name="Salehi B."/>
            <person name="Mishra A.P."/>
            <person name="Shukla I."/>
            <person name="Sharifi-Rad M."/>
            <person name="Contreras M.D.M."/>
            <person name="Segura-Carretero A."/>
            <person name="Fathi H."/>
            <person name="Nasrabadi N.N."/>
            <person name="Kobarfard F."/>
            <person name="Sharifi-Rad J."/>
        </authorList>
    </citation>
    <scope>REVIEW ON THYMOL</scope>
    <scope>BIOTECHNOLOGY</scope>
</reference>
<reference key="4">
    <citation type="journal article" date="2019" name="Nat. Prod. Res.">
        <title>Synthesis and antifungal activity of carvacrol and thymol esters with heteroaromatic carboxylic acids.</title>
        <authorList>
            <person name="Wang K."/>
            <person name="Jiang S."/>
            <person name="Yang Y."/>
            <person name="Fan L."/>
            <person name="Su F."/>
            <person name="Ye M."/>
        </authorList>
    </citation>
    <scope>REVIEW ON CARVACROL AND THYMOL</scope>
    <scope>BIOTECHNOLOGY</scope>
</reference>
<reference key="5">
    <citation type="journal article" date="2020" name="Front. Plant Sci.">
        <title>Carvacrol, a plant metabolite targeting viral protease (Mpro) and ACE2 in host cells can be a possible candidate for COVID-19.</title>
        <authorList>
            <person name="Javed H."/>
            <person name="Meeran M.F.N."/>
            <person name="Jha N.K."/>
            <person name="Ojha S."/>
        </authorList>
    </citation>
    <scope>REVIEW ON CARVACROL EFFECTS ON COVID-19</scope>
    <scope>BIOTECHNOLOGY</scope>
</reference>
<reference key="6">
    <citation type="journal article" date="2020" name="J. Biomol. Struct. Dyn.">
        <title>Identification of phytochemical inhibitors against main protease of COVID-19 using molecular modeling approaches.</title>
        <authorList>
            <person name="Kumar A."/>
            <person name="Choudhir G."/>
            <person name="Shukla S.K."/>
            <person name="Sharma M."/>
            <person name="Tyagi P."/>
            <person name="Bhushan A."/>
            <person name="Rathore M."/>
        </authorList>
    </citation>
    <scope>REVIEW ON CARVACROL EFFECTS ON COVID-19</scope>
    <scope>BIOTECHNOLOGY</scope>
</reference>
<reference key="7">
    <citation type="journal article" date="2020" name="J. Biomol. Struct. Dyn.">
        <title>Synthesis, anticholinesterase activity and molecular modeling studies of novel carvacrol-substituted amide derivatives.</title>
        <authorList>
            <person name="Zengin Kurt B."/>
            <person name="Durdagi S."/>
            <person name="Celebi G."/>
            <person name="Ekhteiari Salmas R."/>
            <person name="Sonmez F."/>
        </authorList>
    </citation>
    <scope>REVIEW ON CARVACROL DERIVATIVES</scope>
    <scope>BIOTECHNOLOGY</scope>
</reference>
<reference key="8">
    <citation type="journal article" date="2020" name="J. Mol. Struct.">
        <title>Computational evaluation of major components from plant essential oils as potent inhibitors of SARS-CoV-2 spike protein.</title>
        <authorList>
            <person name="Kulkarni S.A."/>
            <person name="Nagarajan S.K."/>
            <person name="Ramesh V."/>
            <person name="Palaniyandi V."/>
            <person name="Selvam S.P."/>
            <person name="Madhavan T."/>
        </authorList>
    </citation>
    <scope>REVIEW ON PLANT ESSENTIAL OILS EFFECTS ON COVID-19</scope>
    <scope>BIOTECHNOLOGY</scope>
</reference>
<reference key="9">
    <citation type="journal article" date="2021" name="Front. Chem.">
        <title>Antiviral essential oil components against SARS-CoV-2 in pre-procedural mouth rinses for dental settings during COVID-19: A computational study.</title>
        <authorList>
            <person name="Yadalam P.K."/>
            <person name="Varatharajan K."/>
            <person name="Rajapandian K."/>
            <person name="Chopra P."/>
            <person name="Arumuganainar D."/>
            <person name="Nagarathnam T."/>
            <person name="Sohn H."/>
            <person name="Madhavan T."/>
        </authorList>
    </citation>
    <scope>REVIEW ON PLANT ESSENTIAL OILS EFFECTS ON COVID-19</scope>
    <scope>BIOTECHNOLOGY</scope>
</reference>
<feature type="transit peptide" description="Chloroplast" evidence="5">
    <location>
        <begin position="1"/>
        <end position="47"/>
    </location>
</feature>
<feature type="chain" id="PRO_0000453307" description="Gamma-terpinene synthase, chloroplastic">
    <location>
        <begin position="48"/>
        <end position="597"/>
    </location>
</feature>
<feature type="region of interest" description="Homodimerization" evidence="1">
    <location>
        <begin position="356"/>
        <end position="362"/>
    </location>
</feature>
<feature type="region of interest" description="Homodimerization" evidence="1">
    <location>
        <begin position="428"/>
        <end position="464"/>
    </location>
</feature>
<feature type="short sequence motif" description="DDXXD motif" evidence="4">
    <location>
        <begin position="350"/>
        <end position="354"/>
    </location>
</feature>
<feature type="binding site" evidence="2">
    <location>
        <position position="350"/>
    </location>
    <ligand>
        <name>Mn(2+)</name>
        <dbReference type="ChEBI" id="CHEBI:29035"/>
        <label>1</label>
    </ligand>
</feature>
<feature type="binding site" evidence="2">
    <location>
        <position position="350"/>
    </location>
    <ligand>
        <name>Mn(2+)</name>
        <dbReference type="ChEBI" id="CHEBI:29035"/>
        <label>2</label>
    </ligand>
</feature>
<feature type="binding site" evidence="2">
    <location>
        <position position="354"/>
    </location>
    <ligand>
        <name>Mn(2+)</name>
        <dbReference type="ChEBI" id="CHEBI:29035"/>
        <label>1</label>
    </ligand>
</feature>
<feature type="binding site" evidence="2">
    <location>
        <position position="354"/>
    </location>
    <ligand>
        <name>Mn(2+)</name>
        <dbReference type="ChEBI" id="CHEBI:29035"/>
        <label>2</label>
    </ligand>
</feature>
<feature type="binding site" evidence="2">
    <location>
        <position position="494"/>
    </location>
    <ligand>
        <name>Mn(2+)</name>
        <dbReference type="ChEBI" id="CHEBI:29035"/>
        <label>3</label>
    </ligand>
</feature>
<feature type="binding site" evidence="2">
    <location>
        <position position="502"/>
    </location>
    <ligand>
        <name>Mn(2+)</name>
        <dbReference type="ChEBI" id="CHEBI:29035"/>
        <label>3</label>
    </ligand>
</feature>
<feature type="splice variant" id="VSP_061121" description="In isoform 2.">
    <original>MATLSMQVSILNKQLKNLNSFGMRASKLPLVARRVDVSTTRLRPICSASQ</original>
    <variation>MASL</variation>
    <location>
        <begin position="1"/>
        <end position="50"/>
    </location>
</feature>
<feature type="sequence conflict" description="In Ref. 1; AGK88262." evidence="16" ref="1">
    <original>TL</original>
    <variation>PP</variation>
    <location>
        <begin position="3"/>
        <end position="4"/>
    </location>
</feature>
<feature type="sequence conflict" description="In Ref. 1; AGK88262." evidence="16" ref="1">
    <original>NKQL</original>
    <variation>SKQV</variation>
    <location>
        <begin position="12"/>
        <end position="15"/>
    </location>
</feature>
<feature type="sequence conflict" description="In Ref. 1; AGK88262." evidence="16" ref="1">
    <original>L</original>
    <variation>M</variation>
    <location>
        <position position="30"/>
    </location>
</feature>
<feature type="sequence conflict" description="In Ref. 1; AGK88262." evidence="16" ref="1">
    <original>Q</original>
    <variation>L</variation>
    <location>
        <position position="50"/>
    </location>
</feature>
<comment type="function">
    <text evidence="6">Involved in the biosynthesis of phenolic monoterpenes natural products thymol and carvacrol which have a broad range of biological activities acting as antimicrobial compounds, insecticides, antioxidants and pharmaceutical agents (PubMed:23624978). Monoterpene synthase which catalyzes the conversion of geranyl diphosphate (GPP) to gamma-terpinene and minor amounts of other monoterpenes (e.g. alpha-thujene, alpha-terpinene, myrcene, sabinene, (+)-R-limonene, alpha-pinene and alpha-phellandrene) (PubMed:23624978).</text>
</comment>
<comment type="catalytic activity">
    <molecule>Gamma-terpinene synthase, chloroplastic</molecule>
    <reaction evidence="6">
        <text>(2E)-geranyl diphosphate = gamma-terpinene + diphosphate</text>
        <dbReference type="Rhea" id="RHEA:32559"/>
        <dbReference type="ChEBI" id="CHEBI:10577"/>
        <dbReference type="ChEBI" id="CHEBI:33019"/>
        <dbReference type="ChEBI" id="CHEBI:58057"/>
        <dbReference type="EC" id="4.2.3.114"/>
    </reaction>
    <physiologicalReaction direction="left-to-right" evidence="6">
        <dbReference type="Rhea" id="RHEA:32560"/>
    </physiologicalReaction>
</comment>
<comment type="cofactor">
    <cofactor evidence="3">
        <name>Mn(2+)</name>
        <dbReference type="ChEBI" id="CHEBI:29035"/>
    </cofactor>
    <cofactor evidence="3">
        <name>Mg(2+)</name>
        <dbReference type="ChEBI" id="CHEBI:18420"/>
    </cofactor>
    <text evidence="3">Binds 3 Mg(2+) or Mn(2+) ions per subunit.</text>
</comment>
<comment type="pathway">
    <text evidence="6">Secondary metabolite biosynthesis; terpenoid biosynthesis.</text>
</comment>
<comment type="subunit">
    <text evidence="1">Homodimer.</text>
</comment>
<comment type="subcellular location">
    <subcellularLocation>
        <location evidence="5">Plastid</location>
        <location evidence="5">Chloroplast</location>
    </subcellularLocation>
</comment>
<comment type="alternative products">
    <event type="alternative splicing"/>
    <isoform>
        <id>R4JQT5-1</id>
        <name>1</name>
        <sequence type="displayed"/>
    </isoform>
    <isoform>
        <id>R4JQT5-2</id>
        <name>2</name>
        <sequence type="described" ref="VSP_061121"/>
    </isoform>
</comment>
<comment type="domain">
    <text evidence="4">The Asp-Asp-Xaa-Xaa-Asp/Glu (DDXXD/E) motif is important for the catalytic activity, presumably through binding to Mg(2+).</text>
</comment>
<comment type="biotechnology">
    <text evidence="9 10 13 15">The monoterpenic phenol thymol is widely used as a fragrance and a flavoring ingredient in food and cosmetic industries (PubMed:29785774). Its derivatives have also several biological and pharmacological properties such as antimicrobial, antioxidant, anticarcinogenesis, anti-inflammatory and antispasmodic activities (PubMed:29785774, PubMed:29874939). Medical applications include the treatment of disorders affecting the respiratory, nervous, and cardiovascular systems (PubMed:29785774). It may also act as a growth enhancer and immunomodulator (PubMed:29785774). Thymol may also have antiviral activity toward COVID-19 by binding to the S1 receptor binding domain of the SARS-CoV-2 spike (S) glycoprotein (PubMed:32834111, PubMed:33855010).</text>
</comment>
<comment type="biotechnology">
    <text evidence="8 10 11 12 13 14 15">The monoterpenic phenol carvacrol is commonly used as a fragrance and a food flavoring ingredient and preservative (PubMed:24915411). Its derivatives exhibit also various biological and pharmacological properties including antioxidant, antibacterial, antifungal, insecticid, nematicid, anticancer, anti-inflammatory, hepatoprotective, spasmolytic, and vasorelaxant (PubMed:24915411, PubMed:29874939, PubMed:30836858, PubMed:33664752). Phytochemical inhibitor targeting the main SARS-CoV-2 viral protease (Mpro) and ACE2 in human host cells, carvacrol is a possible candidate for treating COVID-19 (PubMed:32448034, PubMed:33664752). Carvacrol may also have antiviral activity toward COVID-19 by binding to the S1 receptor binding domain of the SARS-CoV-2 spike (S) glycoprotein (PubMed:32834111, PubMed:33855010).</text>
</comment>
<comment type="similarity">
    <text evidence="16">Belongs to the terpene synthase family.</text>
</comment>
<evidence type="ECO:0000250" key="1">
    <source>
        <dbReference type="UniProtKB" id="A0A0M3Q1Q3"/>
    </source>
</evidence>
<evidence type="ECO:0000250" key="2">
    <source>
        <dbReference type="UniProtKB" id="A0A1C9J6A7"/>
    </source>
</evidence>
<evidence type="ECO:0000250" key="3">
    <source>
        <dbReference type="UniProtKB" id="E2E2P0"/>
    </source>
</evidence>
<evidence type="ECO:0000250" key="4">
    <source>
        <dbReference type="UniProtKB" id="Q9X839"/>
    </source>
</evidence>
<evidence type="ECO:0000255" key="5"/>
<evidence type="ECO:0000269" key="6">
    <source>
    </source>
</evidence>
<evidence type="ECO:0000303" key="7">
    <source>
    </source>
</evidence>
<evidence type="ECO:0000303" key="8">
    <source>
    </source>
</evidence>
<evidence type="ECO:0000303" key="9">
    <source>
    </source>
</evidence>
<evidence type="ECO:0000303" key="10">
    <source>
    </source>
</evidence>
<evidence type="ECO:0000303" key="11">
    <source>
    </source>
</evidence>
<evidence type="ECO:0000303" key="12">
    <source>
    </source>
</evidence>
<evidence type="ECO:0000303" key="13">
    <source>
    </source>
</evidence>
<evidence type="ECO:0000303" key="14">
    <source>
    </source>
</evidence>
<evidence type="ECO:0000303" key="15">
    <source>
    </source>
</evidence>
<evidence type="ECO:0000305" key="16"/>
<proteinExistence type="evidence at protein level"/>
<gene>
    <name evidence="7" type="primary">TPS2</name>
</gene>
<protein>
    <recommendedName>
        <fullName evidence="7">Gamma-terpinene synthase, chloroplastic</fullName>
        <ecNumber evidence="6">4.2.3.114</ecNumber>
    </recommendedName>
    <alternativeName>
        <fullName evidence="7">Terpene synthase 2</fullName>
        <shortName evidence="7">TcTPS2</shortName>
    </alternativeName>
</protein>
<sequence length="597" mass="69296">MATLSMQVSILNKQLKNLNSFGMRASKLPLVARRVDVSTTRLRPICSASQQVEEETRRSGNYQASIWDNAFIQSFNTNKYRDEKHLNRKEELIAQVKVLLNTKMEAVKQLELIDDLRNLGLTYYFQDEFKKILTCIYNDHKCFKNEQVGDLYFTSLGFRLLRLHGFDVSEEVFSFFKNEDGSDFKASLGENTKDVLQLYEASFLVRVGEVTLEQARVFSTKILEKKVDEGINDEKLLAWIQHSLALPLHWRIQRLEARWFLDAYAARKDMNPLIFELGKIDFHIIQETQLEEVQEVSRWWTNSNLAEKLPFVRDRIVECYFWALGLFEPHEYGYQRKMAAIIITFVTIIDDVYDVYGTLDELQLFTDAIRKWDFESISTLPYYMQVCYLALYTYASELAYDILKDQGFNSISYLQRSWLSLVEGFFQEAKWYYAGYTPTLAEYLENAKVSISSPTIISQVYFTLPNSTERTVVENVYGYHNILYLSGMILRLADDLGTTQFELKRGDVQKAIQCYMKDNNATEKEGQEHVKYLLLEAWKEMNTAMADPDCPLSEDLVDAAANLGRASQFIYLEGDGHGVQHSEIHNQMGGLIFEPYV</sequence>
<keyword id="KW-0025">Alternative splicing</keyword>
<keyword id="KW-0150">Chloroplast</keyword>
<keyword id="KW-0456">Lyase</keyword>
<keyword id="KW-0460">Magnesium</keyword>
<keyword id="KW-0464">Manganese</keyword>
<keyword id="KW-0479">Metal-binding</keyword>
<keyword id="KW-0934">Plastid</keyword>
<keyword id="KW-0809">Transit peptide</keyword>